<comment type="function">
    <text evidence="1">May play a role in DNA repair. It seems to be involved in an RecBC-independent recombinational process of DNA repair. It may act with RecF and RecO.</text>
</comment>
<comment type="similarity">
    <text evidence="1">Belongs to the RecR family.</text>
</comment>
<accession>A1TQI0</accession>
<keyword id="KW-0227">DNA damage</keyword>
<keyword id="KW-0233">DNA recombination</keyword>
<keyword id="KW-0234">DNA repair</keyword>
<keyword id="KW-0479">Metal-binding</keyword>
<keyword id="KW-0862">Zinc</keyword>
<keyword id="KW-0863">Zinc-finger</keyword>
<reference key="1">
    <citation type="submission" date="2006-12" db="EMBL/GenBank/DDBJ databases">
        <title>Complete sequence of Acidovorax avenae subsp. citrulli AAC00-1.</title>
        <authorList>
            <person name="Copeland A."/>
            <person name="Lucas S."/>
            <person name="Lapidus A."/>
            <person name="Barry K."/>
            <person name="Detter J.C."/>
            <person name="Glavina del Rio T."/>
            <person name="Dalin E."/>
            <person name="Tice H."/>
            <person name="Pitluck S."/>
            <person name="Kiss H."/>
            <person name="Brettin T."/>
            <person name="Bruce D."/>
            <person name="Han C."/>
            <person name="Tapia R."/>
            <person name="Gilna P."/>
            <person name="Schmutz J."/>
            <person name="Larimer F."/>
            <person name="Land M."/>
            <person name="Hauser L."/>
            <person name="Kyrpides N."/>
            <person name="Kim E."/>
            <person name="Stahl D."/>
            <person name="Richardson P."/>
        </authorList>
    </citation>
    <scope>NUCLEOTIDE SEQUENCE [LARGE SCALE GENOMIC DNA]</scope>
    <source>
        <strain>AAC00-1</strain>
    </source>
</reference>
<dbReference type="EMBL" id="CP000512">
    <property type="protein sequence ID" value="ABM33218.1"/>
    <property type="molecule type" value="Genomic_DNA"/>
</dbReference>
<dbReference type="RefSeq" id="WP_011795742.1">
    <property type="nucleotide sequence ID" value="NC_008752.1"/>
</dbReference>
<dbReference type="SMR" id="A1TQI0"/>
<dbReference type="STRING" id="397945.Aave_2646"/>
<dbReference type="GeneID" id="79792233"/>
<dbReference type="KEGG" id="aav:Aave_2646"/>
<dbReference type="eggNOG" id="COG0353">
    <property type="taxonomic scope" value="Bacteria"/>
</dbReference>
<dbReference type="HOGENOM" id="CLU_060739_1_2_4"/>
<dbReference type="Proteomes" id="UP000002596">
    <property type="component" value="Chromosome"/>
</dbReference>
<dbReference type="GO" id="GO:0003677">
    <property type="term" value="F:DNA binding"/>
    <property type="evidence" value="ECO:0007669"/>
    <property type="project" value="UniProtKB-UniRule"/>
</dbReference>
<dbReference type="GO" id="GO:0008270">
    <property type="term" value="F:zinc ion binding"/>
    <property type="evidence" value="ECO:0007669"/>
    <property type="project" value="UniProtKB-KW"/>
</dbReference>
<dbReference type="GO" id="GO:0006310">
    <property type="term" value="P:DNA recombination"/>
    <property type="evidence" value="ECO:0007669"/>
    <property type="project" value="UniProtKB-UniRule"/>
</dbReference>
<dbReference type="GO" id="GO:0006281">
    <property type="term" value="P:DNA repair"/>
    <property type="evidence" value="ECO:0007669"/>
    <property type="project" value="UniProtKB-UniRule"/>
</dbReference>
<dbReference type="CDD" id="cd01025">
    <property type="entry name" value="TOPRIM_recR"/>
    <property type="match status" value="1"/>
</dbReference>
<dbReference type="Gene3D" id="3.40.1360.10">
    <property type="match status" value="1"/>
</dbReference>
<dbReference type="Gene3D" id="6.10.250.240">
    <property type="match status" value="1"/>
</dbReference>
<dbReference type="Gene3D" id="1.10.8.420">
    <property type="entry name" value="RecR Domain 1"/>
    <property type="match status" value="1"/>
</dbReference>
<dbReference type="HAMAP" id="MF_00017">
    <property type="entry name" value="RecR"/>
    <property type="match status" value="1"/>
</dbReference>
<dbReference type="InterPro" id="IPR000093">
    <property type="entry name" value="DNA_Rcmb_RecR"/>
</dbReference>
<dbReference type="InterPro" id="IPR023627">
    <property type="entry name" value="Rcmb_RecR"/>
</dbReference>
<dbReference type="InterPro" id="IPR015967">
    <property type="entry name" value="Rcmb_RecR_Znf"/>
</dbReference>
<dbReference type="InterPro" id="IPR006171">
    <property type="entry name" value="TOPRIM_dom"/>
</dbReference>
<dbReference type="InterPro" id="IPR034137">
    <property type="entry name" value="TOPRIM_RecR"/>
</dbReference>
<dbReference type="NCBIfam" id="TIGR00615">
    <property type="entry name" value="recR"/>
    <property type="match status" value="1"/>
</dbReference>
<dbReference type="PANTHER" id="PTHR30446">
    <property type="entry name" value="RECOMBINATION PROTEIN RECR"/>
    <property type="match status" value="1"/>
</dbReference>
<dbReference type="PANTHER" id="PTHR30446:SF0">
    <property type="entry name" value="RECOMBINATION PROTEIN RECR"/>
    <property type="match status" value="1"/>
</dbReference>
<dbReference type="Pfam" id="PF21175">
    <property type="entry name" value="RecR_C"/>
    <property type="match status" value="1"/>
</dbReference>
<dbReference type="Pfam" id="PF21176">
    <property type="entry name" value="RecR_HhH"/>
    <property type="match status" value="1"/>
</dbReference>
<dbReference type="Pfam" id="PF02132">
    <property type="entry name" value="RecR_ZnF"/>
    <property type="match status" value="1"/>
</dbReference>
<dbReference type="Pfam" id="PF13662">
    <property type="entry name" value="Toprim_4"/>
    <property type="match status" value="1"/>
</dbReference>
<dbReference type="SMART" id="SM00493">
    <property type="entry name" value="TOPRIM"/>
    <property type="match status" value="1"/>
</dbReference>
<dbReference type="SUPFAM" id="SSF111304">
    <property type="entry name" value="Recombination protein RecR"/>
    <property type="match status" value="1"/>
</dbReference>
<dbReference type="PROSITE" id="PS50880">
    <property type="entry name" value="TOPRIM"/>
    <property type="match status" value="1"/>
</dbReference>
<gene>
    <name evidence="1" type="primary">recR</name>
    <name type="ordered locus">Aave_2646</name>
</gene>
<proteinExistence type="inferred from homology"/>
<feature type="chain" id="PRO_0000322853" description="Recombination protein RecR">
    <location>
        <begin position="1"/>
        <end position="199"/>
    </location>
</feature>
<feature type="domain" description="Toprim" evidence="1">
    <location>
        <begin position="83"/>
        <end position="178"/>
    </location>
</feature>
<feature type="zinc finger region" description="C4-type" evidence="1">
    <location>
        <begin position="60"/>
        <end position="75"/>
    </location>
</feature>
<name>RECR_PARC0</name>
<organism>
    <name type="scientific">Paracidovorax citrulli (strain AAC00-1)</name>
    <name type="common">Acidovorax citrulli</name>
    <dbReference type="NCBI Taxonomy" id="397945"/>
    <lineage>
        <taxon>Bacteria</taxon>
        <taxon>Pseudomonadati</taxon>
        <taxon>Pseudomonadota</taxon>
        <taxon>Betaproteobacteria</taxon>
        <taxon>Burkholderiales</taxon>
        <taxon>Comamonadaceae</taxon>
        <taxon>Paracidovorax</taxon>
    </lineage>
</organism>
<sequence length="199" mass="21303">MAPGSDMHSLDALVQALRRLPGVGVKSAQRMAFHLLQHDRQGAEVLSRALHDAAQSVRHCARCHTFTEGEVCSTCLDPSRDASRLAVVETPADQAALERTGAFRGLYFVLMGKLSPLDGIGPKDIGFGKLLERAGDGVVQEVILATNFTAEGEATAHALSETLKARGMHVTRLARGVPVGSELEYVDLGTIAHALVDRR</sequence>
<protein>
    <recommendedName>
        <fullName evidence="1">Recombination protein RecR</fullName>
    </recommendedName>
</protein>
<evidence type="ECO:0000255" key="1">
    <source>
        <dbReference type="HAMAP-Rule" id="MF_00017"/>
    </source>
</evidence>